<sequence length="141" mass="14830">MAKKVIANIKLQIKAGKATPSPPIGPALGQHGVNIMEFCKAYNALTQSQEGMVIPVVITVYADRSFSFVTKTPPAAVLLKQAAKIAKGAGDPKRDKVGTVSAAQVREIADLKYKDLNAVNIEGAIKIIEGTARSMGIEISG</sequence>
<gene>
    <name evidence="1" type="primary">rplK</name>
    <name type="ordered locus">SYNAS_02890</name>
    <name type="ORF">SYN_00069</name>
</gene>
<comment type="function">
    <text evidence="1">Forms part of the ribosomal stalk which helps the ribosome interact with GTP-bound translation factors.</text>
</comment>
<comment type="subunit">
    <text evidence="1">Part of the ribosomal stalk of the 50S ribosomal subunit. Interacts with L10 and the large rRNA to form the base of the stalk. L10 forms an elongated spine to which L12 dimers bind in a sequential fashion forming a multimeric L10(L12)X complex.</text>
</comment>
<comment type="PTM">
    <text evidence="1">One or more lysine residues are methylated.</text>
</comment>
<comment type="similarity">
    <text evidence="1">Belongs to the universal ribosomal protein uL11 family.</text>
</comment>
<comment type="sequence caution" evidence="2">
    <conflict type="erroneous initiation">
        <sequence resource="EMBL-CDS" id="ABC76168"/>
    </conflict>
</comment>
<proteinExistence type="inferred from homology"/>
<reference key="1">
    <citation type="journal article" date="2007" name="Proc. Natl. Acad. Sci. U.S.A.">
        <title>The genome of Syntrophus aciditrophicus: life at the thermodynamic limit of microbial growth.</title>
        <authorList>
            <person name="McInerney M.J."/>
            <person name="Rohlin L."/>
            <person name="Mouttaki H."/>
            <person name="Kim U."/>
            <person name="Krupp R.S."/>
            <person name="Rios-Hernandez L."/>
            <person name="Sieber J."/>
            <person name="Struchtemeyer C.G."/>
            <person name="Bhattacharyya A."/>
            <person name="Campbell J.W."/>
            <person name="Gunsalus R.P."/>
        </authorList>
    </citation>
    <scope>NUCLEOTIDE SEQUENCE [LARGE SCALE GENOMIC DNA]</scope>
    <source>
        <strain>SB</strain>
    </source>
</reference>
<dbReference type="EMBL" id="CP000252">
    <property type="protein sequence ID" value="ABC76168.1"/>
    <property type="status" value="ALT_INIT"/>
    <property type="molecule type" value="Genomic_DNA"/>
</dbReference>
<dbReference type="RefSeq" id="WP_041584588.1">
    <property type="nucleotide sequence ID" value="NC_007759.1"/>
</dbReference>
<dbReference type="SMR" id="Q2LQ91"/>
<dbReference type="FunCoup" id="Q2LQ91">
    <property type="interactions" value="565"/>
</dbReference>
<dbReference type="STRING" id="56780.SYN_00069"/>
<dbReference type="KEGG" id="sat:SYN_00069"/>
<dbReference type="eggNOG" id="COG0080">
    <property type="taxonomic scope" value="Bacteria"/>
</dbReference>
<dbReference type="HOGENOM" id="CLU_074237_2_1_7"/>
<dbReference type="InParanoid" id="Q2LQ91"/>
<dbReference type="OrthoDB" id="9802408at2"/>
<dbReference type="Proteomes" id="UP000001933">
    <property type="component" value="Chromosome"/>
</dbReference>
<dbReference type="GO" id="GO:0022625">
    <property type="term" value="C:cytosolic large ribosomal subunit"/>
    <property type="evidence" value="ECO:0007669"/>
    <property type="project" value="TreeGrafter"/>
</dbReference>
<dbReference type="GO" id="GO:0070180">
    <property type="term" value="F:large ribosomal subunit rRNA binding"/>
    <property type="evidence" value="ECO:0007669"/>
    <property type="project" value="UniProtKB-UniRule"/>
</dbReference>
<dbReference type="GO" id="GO:0003735">
    <property type="term" value="F:structural constituent of ribosome"/>
    <property type="evidence" value="ECO:0007669"/>
    <property type="project" value="InterPro"/>
</dbReference>
<dbReference type="GO" id="GO:0006412">
    <property type="term" value="P:translation"/>
    <property type="evidence" value="ECO:0007669"/>
    <property type="project" value="UniProtKB-UniRule"/>
</dbReference>
<dbReference type="CDD" id="cd00349">
    <property type="entry name" value="Ribosomal_L11"/>
    <property type="match status" value="1"/>
</dbReference>
<dbReference type="FunFam" id="1.10.10.250:FF:000001">
    <property type="entry name" value="50S ribosomal protein L11"/>
    <property type="match status" value="1"/>
</dbReference>
<dbReference type="FunFam" id="3.30.1550.10:FF:000001">
    <property type="entry name" value="50S ribosomal protein L11"/>
    <property type="match status" value="1"/>
</dbReference>
<dbReference type="Gene3D" id="1.10.10.250">
    <property type="entry name" value="Ribosomal protein L11, C-terminal domain"/>
    <property type="match status" value="1"/>
</dbReference>
<dbReference type="Gene3D" id="3.30.1550.10">
    <property type="entry name" value="Ribosomal protein L11/L12, N-terminal domain"/>
    <property type="match status" value="1"/>
</dbReference>
<dbReference type="HAMAP" id="MF_00736">
    <property type="entry name" value="Ribosomal_uL11"/>
    <property type="match status" value="1"/>
</dbReference>
<dbReference type="InterPro" id="IPR000911">
    <property type="entry name" value="Ribosomal_uL11"/>
</dbReference>
<dbReference type="InterPro" id="IPR006519">
    <property type="entry name" value="Ribosomal_uL11_bac-typ"/>
</dbReference>
<dbReference type="InterPro" id="IPR020783">
    <property type="entry name" value="Ribosomal_uL11_C"/>
</dbReference>
<dbReference type="InterPro" id="IPR036769">
    <property type="entry name" value="Ribosomal_uL11_C_sf"/>
</dbReference>
<dbReference type="InterPro" id="IPR020785">
    <property type="entry name" value="Ribosomal_uL11_CS"/>
</dbReference>
<dbReference type="InterPro" id="IPR020784">
    <property type="entry name" value="Ribosomal_uL11_N"/>
</dbReference>
<dbReference type="InterPro" id="IPR036796">
    <property type="entry name" value="Ribosomal_uL11_N_sf"/>
</dbReference>
<dbReference type="NCBIfam" id="TIGR01632">
    <property type="entry name" value="L11_bact"/>
    <property type="match status" value="1"/>
</dbReference>
<dbReference type="PANTHER" id="PTHR11661">
    <property type="entry name" value="60S RIBOSOMAL PROTEIN L12"/>
    <property type="match status" value="1"/>
</dbReference>
<dbReference type="PANTHER" id="PTHR11661:SF1">
    <property type="entry name" value="LARGE RIBOSOMAL SUBUNIT PROTEIN UL11M"/>
    <property type="match status" value="1"/>
</dbReference>
<dbReference type="Pfam" id="PF00298">
    <property type="entry name" value="Ribosomal_L11"/>
    <property type="match status" value="1"/>
</dbReference>
<dbReference type="Pfam" id="PF03946">
    <property type="entry name" value="Ribosomal_L11_N"/>
    <property type="match status" value="1"/>
</dbReference>
<dbReference type="SMART" id="SM00649">
    <property type="entry name" value="RL11"/>
    <property type="match status" value="1"/>
</dbReference>
<dbReference type="SUPFAM" id="SSF54747">
    <property type="entry name" value="Ribosomal L11/L12e N-terminal domain"/>
    <property type="match status" value="1"/>
</dbReference>
<dbReference type="SUPFAM" id="SSF46906">
    <property type="entry name" value="Ribosomal protein L11, C-terminal domain"/>
    <property type="match status" value="1"/>
</dbReference>
<dbReference type="PROSITE" id="PS00359">
    <property type="entry name" value="RIBOSOMAL_L11"/>
    <property type="match status" value="1"/>
</dbReference>
<organism>
    <name type="scientific">Syntrophus aciditrophicus (strain SB)</name>
    <dbReference type="NCBI Taxonomy" id="56780"/>
    <lineage>
        <taxon>Bacteria</taxon>
        <taxon>Pseudomonadati</taxon>
        <taxon>Thermodesulfobacteriota</taxon>
        <taxon>Syntrophia</taxon>
        <taxon>Syntrophales</taxon>
        <taxon>Syntrophaceae</taxon>
        <taxon>Syntrophus</taxon>
    </lineage>
</organism>
<evidence type="ECO:0000255" key="1">
    <source>
        <dbReference type="HAMAP-Rule" id="MF_00736"/>
    </source>
</evidence>
<evidence type="ECO:0000305" key="2"/>
<name>RL11_SYNAS</name>
<accession>Q2LQ91</accession>
<protein>
    <recommendedName>
        <fullName evidence="1">Large ribosomal subunit protein uL11</fullName>
    </recommendedName>
    <alternativeName>
        <fullName evidence="2">50S ribosomal protein L11</fullName>
    </alternativeName>
</protein>
<keyword id="KW-0488">Methylation</keyword>
<keyword id="KW-1185">Reference proteome</keyword>
<keyword id="KW-0687">Ribonucleoprotein</keyword>
<keyword id="KW-0689">Ribosomal protein</keyword>
<keyword id="KW-0694">RNA-binding</keyword>
<keyword id="KW-0699">rRNA-binding</keyword>
<feature type="chain" id="PRO_0000258233" description="Large ribosomal subunit protein uL11">
    <location>
        <begin position="1"/>
        <end position="141"/>
    </location>
</feature>